<name>RLMH_MYCS5</name>
<reference key="1">
    <citation type="journal article" date="2005" name="J. Bacteriol.">
        <title>Swine and poultry pathogens: the complete genome sequences of two strains of Mycoplasma hyopneumoniae and a strain of Mycoplasma synoviae.</title>
        <authorList>
            <person name="Vasconcelos A.T.R."/>
            <person name="Ferreira H.B."/>
            <person name="Bizarro C.V."/>
            <person name="Bonatto S.L."/>
            <person name="Carvalho M.O."/>
            <person name="Pinto P.M."/>
            <person name="Almeida D.F."/>
            <person name="Almeida L.G.P."/>
            <person name="Almeida R."/>
            <person name="Alves-Junior L."/>
            <person name="Assuncao E.N."/>
            <person name="Azevedo V.A.C."/>
            <person name="Bogo M.R."/>
            <person name="Brigido M.M."/>
            <person name="Brocchi M."/>
            <person name="Burity H.A."/>
            <person name="Camargo A.A."/>
            <person name="Camargo S.S."/>
            <person name="Carepo M.S."/>
            <person name="Carraro D.M."/>
            <person name="de Mattos Cascardo J.C."/>
            <person name="Castro L.A."/>
            <person name="Cavalcanti G."/>
            <person name="Chemale G."/>
            <person name="Collevatti R.G."/>
            <person name="Cunha C.W."/>
            <person name="Dallagiovanna B."/>
            <person name="Dambros B.P."/>
            <person name="Dellagostin O.A."/>
            <person name="Falcao C."/>
            <person name="Fantinatti-Garboggini F."/>
            <person name="Felipe M.S.S."/>
            <person name="Fiorentin L."/>
            <person name="Franco G.R."/>
            <person name="Freitas N.S.A."/>
            <person name="Frias D."/>
            <person name="Grangeiro T.B."/>
            <person name="Grisard E.C."/>
            <person name="Guimaraes C.T."/>
            <person name="Hungria M."/>
            <person name="Jardim S.N."/>
            <person name="Krieger M.A."/>
            <person name="Laurino J.P."/>
            <person name="Lima L.F.A."/>
            <person name="Lopes M.I."/>
            <person name="Loreto E.L.S."/>
            <person name="Madeira H.M.F."/>
            <person name="Manfio G.P."/>
            <person name="Maranhao A.Q."/>
            <person name="Martinkovics C.T."/>
            <person name="Medeiros S.R.B."/>
            <person name="Moreira M.A.M."/>
            <person name="Neiva M."/>
            <person name="Ramalho-Neto C.E."/>
            <person name="Nicolas M.F."/>
            <person name="Oliveira S.C."/>
            <person name="Paixao R.F.C."/>
            <person name="Pedrosa F.O."/>
            <person name="Pena S.D.J."/>
            <person name="Pereira M."/>
            <person name="Pereira-Ferrari L."/>
            <person name="Piffer I."/>
            <person name="Pinto L.S."/>
            <person name="Potrich D.P."/>
            <person name="Salim A.C.M."/>
            <person name="Santos F.R."/>
            <person name="Schmitt R."/>
            <person name="Schneider M.P.C."/>
            <person name="Schrank A."/>
            <person name="Schrank I.S."/>
            <person name="Schuck A.F."/>
            <person name="Seuanez H.N."/>
            <person name="Silva D.W."/>
            <person name="Silva R."/>
            <person name="Silva S.C."/>
            <person name="Soares C.M.A."/>
            <person name="Souza K.R.L."/>
            <person name="Souza R.C."/>
            <person name="Staats C.C."/>
            <person name="Steffens M.B.R."/>
            <person name="Teixeira S.M.R."/>
            <person name="Urmenyi T.P."/>
            <person name="Vainstein M.H."/>
            <person name="Zuccherato L.W."/>
            <person name="Simpson A.J.G."/>
            <person name="Zaha A."/>
        </authorList>
    </citation>
    <scope>NUCLEOTIDE SEQUENCE [LARGE SCALE GENOMIC DNA]</scope>
    <source>
        <strain>53</strain>
    </source>
</reference>
<keyword id="KW-0963">Cytoplasm</keyword>
<keyword id="KW-0489">Methyltransferase</keyword>
<keyword id="KW-1185">Reference proteome</keyword>
<keyword id="KW-0698">rRNA processing</keyword>
<keyword id="KW-0949">S-adenosyl-L-methionine</keyword>
<keyword id="KW-0808">Transferase</keyword>
<organism>
    <name type="scientific">Mycoplasmopsis synoviae (strain 53)</name>
    <name type="common">Mycoplasma synoviae</name>
    <dbReference type="NCBI Taxonomy" id="262723"/>
    <lineage>
        <taxon>Bacteria</taxon>
        <taxon>Bacillati</taxon>
        <taxon>Mycoplasmatota</taxon>
        <taxon>Mycoplasmoidales</taxon>
        <taxon>Metamycoplasmataceae</taxon>
        <taxon>Mycoplasmopsis</taxon>
    </lineage>
</organism>
<proteinExistence type="inferred from homology"/>
<dbReference type="EC" id="2.1.1.177" evidence="1"/>
<dbReference type="EMBL" id="AE017245">
    <property type="protein sequence ID" value="AAZ43924.1"/>
    <property type="molecule type" value="Genomic_DNA"/>
</dbReference>
<dbReference type="RefSeq" id="WP_011283653.1">
    <property type="nucleotide sequence ID" value="NC_007294.1"/>
</dbReference>
<dbReference type="SMR" id="Q4A5P7"/>
<dbReference type="STRING" id="262723.MS53_0516"/>
<dbReference type="KEGG" id="msy:MS53_0516"/>
<dbReference type="eggNOG" id="COG1576">
    <property type="taxonomic scope" value="Bacteria"/>
</dbReference>
<dbReference type="HOGENOM" id="CLU_100552_0_0_14"/>
<dbReference type="OrthoDB" id="9806643at2"/>
<dbReference type="Proteomes" id="UP000000549">
    <property type="component" value="Chromosome"/>
</dbReference>
<dbReference type="GO" id="GO:0005737">
    <property type="term" value="C:cytoplasm"/>
    <property type="evidence" value="ECO:0007669"/>
    <property type="project" value="UniProtKB-SubCell"/>
</dbReference>
<dbReference type="GO" id="GO:0070038">
    <property type="term" value="F:rRNA (pseudouridine-N3-)-methyltransferase activity"/>
    <property type="evidence" value="ECO:0007669"/>
    <property type="project" value="UniProtKB-UniRule"/>
</dbReference>
<dbReference type="CDD" id="cd18081">
    <property type="entry name" value="RlmH-like"/>
    <property type="match status" value="1"/>
</dbReference>
<dbReference type="Gene3D" id="3.40.1280.10">
    <property type="match status" value="1"/>
</dbReference>
<dbReference type="HAMAP" id="MF_00658">
    <property type="entry name" value="23SrRNA_methyltr_H"/>
    <property type="match status" value="1"/>
</dbReference>
<dbReference type="InterPro" id="IPR029028">
    <property type="entry name" value="Alpha/beta_knot_MTases"/>
</dbReference>
<dbReference type="InterPro" id="IPR003742">
    <property type="entry name" value="RlmH-like"/>
</dbReference>
<dbReference type="InterPro" id="IPR029026">
    <property type="entry name" value="tRNA_m1G_MTases_N"/>
</dbReference>
<dbReference type="PANTHER" id="PTHR33603">
    <property type="entry name" value="METHYLTRANSFERASE"/>
    <property type="match status" value="1"/>
</dbReference>
<dbReference type="PANTHER" id="PTHR33603:SF1">
    <property type="entry name" value="RIBOSOMAL RNA LARGE SUBUNIT METHYLTRANSFERASE H"/>
    <property type="match status" value="1"/>
</dbReference>
<dbReference type="Pfam" id="PF02590">
    <property type="entry name" value="SPOUT_MTase"/>
    <property type="match status" value="1"/>
</dbReference>
<dbReference type="PIRSF" id="PIRSF004505">
    <property type="entry name" value="MT_bac"/>
    <property type="match status" value="1"/>
</dbReference>
<dbReference type="SUPFAM" id="SSF75217">
    <property type="entry name" value="alpha/beta knot"/>
    <property type="match status" value="1"/>
</dbReference>
<protein>
    <recommendedName>
        <fullName evidence="1">Ribosomal RNA large subunit methyltransferase H</fullName>
        <ecNumber evidence="1">2.1.1.177</ecNumber>
    </recommendedName>
    <alternativeName>
        <fullName evidence="1">23S rRNA (pseudouridine1915-N3)-methyltransferase</fullName>
    </alternativeName>
    <alternativeName>
        <fullName evidence="1">23S rRNA m3Psi1915 methyltransferase</fullName>
    </alternativeName>
    <alternativeName>
        <fullName evidence="1">rRNA (pseudouridine-N3-)-methyltransferase RlmH</fullName>
    </alternativeName>
</protein>
<comment type="function">
    <text evidence="1">Specifically methylates the pseudouridine at position 1915 (m3Psi1915) in 23S rRNA.</text>
</comment>
<comment type="catalytic activity">
    <reaction evidence="1">
        <text>pseudouridine(1915) in 23S rRNA + S-adenosyl-L-methionine = N(3)-methylpseudouridine(1915) in 23S rRNA + S-adenosyl-L-homocysteine + H(+)</text>
        <dbReference type="Rhea" id="RHEA:42752"/>
        <dbReference type="Rhea" id="RHEA-COMP:10221"/>
        <dbReference type="Rhea" id="RHEA-COMP:10222"/>
        <dbReference type="ChEBI" id="CHEBI:15378"/>
        <dbReference type="ChEBI" id="CHEBI:57856"/>
        <dbReference type="ChEBI" id="CHEBI:59789"/>
        <dbReference type="ChEBI" id="CHEBI:65314"/>
        <dbReference type="ChEBI" id="CHEBI:74486"/>
        <dbReference type="EC" id="2.1.1.177"/>
    </reaction>
</comment>
<comment type="subunit">
    <text evidence="1">Homodimer.</text>
</comment>
<comment type="subcellular location">
    <subcellularLocation>
        <location evidence="1">Cytoplasm</location>
    </subcellularLocation>
</comment>
<comment type="similarity">
    <text evidence="1">Belongs to the RNA methyltransferase RlmH family.</text>
</comment>
<sequence length="144" mass="16808">MTINLIAVGKLEKDFQKLFDEYAKRIFVFSKFNLIEIKENTLKNLEVKKEKETLEILSKIPKNSTVFLLSIKGKNYSSEEFSKLITNDANITFVIGGSNGVIESYFENKISFSKLTFPHQLFRVILIEQIYRAFTIKNNLKYHK</sequence>
<accession>Q4A5P7</accession>
<feature type="chain" id="PRO_0000260573" description="Ribosomal RNA large subunit methyltransferase H">
    <location>
        <begin position="1"/>
        <end position="144"/>
    </location>
</feature>
<feature type="binding site" evidence="1">
    <location>
        <position position="68"/>
    </location>
    <ligand>
        <name>S-adenosyl-L-methionine</name>
        <dbReference type="ChEBI" id="CHEBI:59789"/>
    </ligand>
</feature>
<feature type="binding site" evidence="1">
    <location>
        <position position="96"/>
    </location>
    <ligand>
        <name>S-adenosyl-L-methionine</name>
        <dbReference type="ChEBI" id="CHEBI:59789"/>
    </ligand>
</feature>
<feature type="binding site" evidence="1">
    <location>
        <begin position="112"/>
        <end position="117"/>
    </location>
    <ligand>
        <name>S-adenosyl-L-methionine</name>
        <dbReference type="ChEBI" id="CHEBI:59789"/>
    </ligand>
</feature>
<gene>
    <name evidence="1" type="primary">rlmH</name>
    <name type="ordered locus">MS53_0516</name>
</gene>
<evidence type="ECO:0000255" key="1">
    <source>
        <dbReference type="HAMAP-Rule" id="MF_00658"/>
    </source>
</evidence>